<name>SYM_PSEPK</name>
<evidence type="ECO:0000255" key="1">
    <source>
        <dbReference type="HAMAP-Rule" id="MF_00098"/>
    </source>
</evidence>
<feature type="chain" id="PRO_0000139155" description="Methionine--tRNA ligase">
    <location>
        <begin position="1"/>
        <end position="679"/>
    </location>
</feature>
<feature type="domain" description="tRNA-binding" evidence="1">
    <location>
        <begin position="577"/>
        <end position="679"/>
    </location>
</feature>
<feature type="short sequence motif" description="'HIGH' region">
    <location>
        <begin position="14"/>
        <end position="24"/>
    </location>
</feature>
<feature type="short sequence motif" description="'KMSKS' region">
    <location>
        <begin position="331"/>
        <end position="335"/>
    </location>
</feature>
<feature type="binding site" evidence="1">
    <location>
        <position position="145"/>
    </location>
    <ligand>
        <name>Zn(2+)</name>
        <dbReference type="ChEBI" id="CHEBI:29105"/>
    </ligand>
</feature>
<feature type="binding site" evidence="1">
    <location>
        <position position="148"/>
    </location>
    <ligand>
        <name>Zn(2+)</name>
        <dbReference type="ChEBI" id="CHEBI:29105"/>
    </ligand>
</feature>
<feature type="binding site" evidence="1">
    <location>
        <position position="158"/>
    </location>
    <ligand>
        <name>Zn(2+)</name>
        <dbReference type="ChEBI" id="CHEBI:29105"/>
    </ligand>
</feature>
<feature type="binding site" evidence="1">
    <location>
        <position position="161"/>
    </location>
    <ligand>
        <name>Zn(2+)</name>
        <dbReference type="ChEBI" id="CHEBI:29105"/>
    </ligand>
</feature>
<feature type="binding site" evidence="1">
    <location>
        <position position="334"/>
    </location>
    <ligand>
        <name>ATP</name>
        <dbReference type="ChEBI" id="CHEBI:30616"/>
    </ligand>
</feature>
<dbReference type="EC" id="6.1.1.10" evidence="1"/>
<dbReference type="EMBL" id="AE015451">
    <property type="protein sequence ID" value="AAN66722.1"/>
    <property type="molecule type" value="Genomic_DNA"/>
</dbReference>
<dbReference type="RefSeq" id="NP_743258.1">
    <property type="nucleotide sequence ID" value="NC_002947.4"/>
</dbReference>
<dbReference type="RefSeq" id="WP_010952262.1">
    <property type="nucleotide sequence ID" value="NZ_CP169744.1"/>
</dbReference>
<dbReference type="SMR" id="Q88NV7"/>
<dbReference type="STRING" id="160488.PP_1097"/>
<dbReference type="PaxDb" id="160488-PP_1097"/>
<dbReference type="GeneID" id="83678449"/>
<dbReference type="KEGG" id="ppu:PP_1097"/>
<dbReference type="PATRIC" id="fig|160488.4.peg.1164"/>
<dbReference type="eggNOG" id="COG0073">
    <property type="taxonomic scope" value="Bacteria"/>
</dbReference>
<dbReference type="eggNOG" id="COG0143">
    <property type="taxonomic scope" value="Bacteria"/>
</dbReference>
<dbReference type="HOGENOM" id="CLU_009710_7_0_6"/>
<dbReference type="OrthoDB" id="9810191at2"/>
<dbReference type="PhylomeDB" id="Q88NV7"/>
<dbReference type="BioCyc" id="PPUT160488:G1G01-1170-MONOMER"/>
<dbReference type="Proteomes" id="UP000000556">
    <property type="component" value="Chromosome"/>
</dbReference>
<dbReference type="GO" id="GO:0005829">
    <property type="term" value="C:cytosol"/>
    <property type="evidence" value="ECO:0007669"/>
    <property type="project" value="TreeGrafter"/>
</dbReference>
<dbReference type="GO" id="GO:0005524">
    <property type="term" value="F:ATP binding"/>
    <property type="evidence" value="ECO:0007669"/>
    <property type="project" value="UniProtKB-UniRule"/>
</dbReference>
<dbReference type="GO" id="GO:0046872">
    <property type="term" value="F:metal ion binding"/>
    <property type="evidence" value="ECO:0007669"/>
    <property type="project" value="UniProtKB-KW"/>
</dbReference>
<dbReference type="GO" id="GO:0004825">
    <property type="term" value="F:methionine-tRNA ligase activity"/>
    <property type="evidence" value="ECO:0007669"/>
    <property type="project" value="UniProtKB-UniRule"/>
</dbReference>
<dbReference type="GO" id="GO:0000049">
    <property type="term" value="F:tRNA binding"/>
    <property type="evidence" value="ECO:0007669"/>
    <property type="project" value="UniProtKB-KW"/>
</dbReference>
<dbReference type="GO" id="GO:0006431">
    <property type="term" value="P:methionyl-tRNA aminoacylation"/>
    <property type="evidence" value="ECO:0007669"/>
    <property type="project" value="UniProtKB-UniRule"/>
</dbReference>
<dbReference type="CDD" id="cd07957">
    <property type="entry name" value="Anticodon_Ia_Met"/>
    <property type="match status" value="1"/>
</dbReference>
<dbReference type="CDD" id="cd00814">
    <property type="entry name" value="MetRS_core"/>
    <property type="match status" value="1"/>
</dbReference>
<dbReference type="CDD" id="cd02800">
    <property type="entry name" value="tRNA_bind_EcMetRS_like"/>
    <property type="match status" value="1"/>
</dbReference>
<dbReference type="FunFam" id="1.10.730.10:FF:000005">
    <property type="entry name" value="Methionine--tRNA ligase"/>
    <property type="match status" value="1"/>
</dbReference>
<dbReference type="FunFam" id="2.20.28.20:FF:000001">
    <property type="entry name" value="Methionine--tRNA ligase"/>
    <property type="match status" value="1"/>
</dbReference>
<dbReference type="FunFam" id="2.40.50.140:FF:000042">
    <property type="entry name" value="Methionine--tRNA ligase"/>
    <property type="match status" value="1"/>
</dbReference>
<dbReference type="Gene3D" id="3.40.50.620">
    <property type="entry name" value="HUPs"/>
    <property type="match status" value="1"/>
</dbReference>
<dbReference type="Gene3D" id="1.10.730.10">
    <property type="entry name" value="Isoleucyl-tRNA Synthetase, Domain 1"/>
    <property type="match status" value="1"/>
</dbReference>
<dbReference type="Gene3D" id="2.20.28.20">
    <property type="entry name" value="Methionyl-tRNA synthetase, Zn-domain"/>
    <property type="match status" value="1"/>
</dbReference>
<dbReference type="Gene3D" id="2.40.50.140">
    <property type="entry name" value="Nucleic acid-binding proteins"/>
    <property type="match status" value="1"/>
</dbReference>
<dbReference type="HAMAP" id="MF_00098">
    <property type="entry name" value="Met_tRNA_synth_type1"/>
    <property type="match status" value="1"/>
</dbReference>
<dbReference type="InterPro" id="IPR001412">
    <property type="entry name" value="aa-tRNA-synth_I_CS"/>
</dbReference>
<dbReference type="InterPro" id="IPR041872">
    <property type="entry name" value="Anticodon_Met"/>
</dbReference>
<dbReference type="InterPro" id="IPR004495">
    <property type="entry name" value="Met-tRNA-synth_bsu_C"/>
</dbReference>
<dbReference type="InterPro" id="IPR023458">
    <property type="entry name" value="Met-tRNA_ligase_1"/>
</dbReference>
<dbReference type="InterPro" id="IPR014758">
    <property type="entry name" value="Met-tRNA_synth"/>
</dbReference>
<dbReference type="InterPro" id="IPR015413">
    <property type="entry name" value="Methionyl/Leucyl_tRNA_Synth"/>
</dbReference>
<dbReference type="InterPro" id="IPR033911">
    <property type="entry name" value="MetRS_core"/>
</dbReference>
<dbReference type="InterPro" id="IPR029038">
    <property type="entry name" value="MetRS_Zn"/>
</dbReference>
<dbReference type="InterPro" id="IPR012340">
    <property type="entry name" value="NA-bd_OB-fold"/>
</dbReference>
<dbReference type="InterPro" id="IPR014729">
    <property type="entry name" value="Rossmann-like_a/b/a_fold"/>
</dbReference>
<dbReference type="InterPro" id="IPR002547">
    <property type="entry name" value="tRNA-bd_dom"/>
</dbReference>
<dbReference type="InterPro" id="IPR009080">
    <property type="entry name" value="tRNAsynth_Ia_anticodon-bd"/>
</dbReference>
<dbReference type="NCBIfam" id="TIGR00398">
    <property type="entry name" value="metG"/>
    <property type="match status" value="1"/>
</dbReference>
<dbReference type="NCBIfam" id="TIGR00399">
    <property type="entry name" value="metG_C_term"/>
    <property type="match status" value="1"/>
</dbReference>
<dbReference type="NCBIfam" id="NF001100">
    <property type="entry name" value="PRK00133.1"/>
    <property type="match status" value="1"/>
</dbReference>
<dbReference type="PANTHER" id="PTHR45765">
    <property type="entry name" value="METHIONINE--TRNA LIGASE"/>
    <property type="match status" value="1"/>
</dbReference>
<dbReference type="PANTHER" id="PTHR45765:SF1">
    <property type="entry name" value="METHIONINE--TRNA LIGASE, CYTOPLASMIC"/>
    <property type="match status" value="1"/>
</dbReference>
<dbReference type="Pfam" id="PF19303">
    <property type="entry name" value="Anticodon_3"/>
    <property type="match status" value="1"/>
</dbReference>
<dbReference type="Pfam" id="PF09334">
    <property type="entry name" value="tRNA-synt_1g"/>
    <property type="match status" value="1"/>
</dbReference>
<dbReference type="Pfam" id="PF01588">
    <property type="entry name" value="tRNA_bind"/>
    <property type="match status" value="1"/>
</dbReference>
<dbReference type="PRINTS" id="PR01041">
    <property type="entry name" value="TRNASYNTHMET"/>
</dbReference>
<dbReference type="SUPFAM" id="SSF47323">
    <property type="entry name" value="Anticodon-binding domain of a subclass of class I aminoacyl-tRNA synthetases"/>
    <property type="match status" value="1"/>
</dbReference>
<dbReference type="SUPFAM" id="SSF57770">
    <property type="entry name" value="Methionyl-tRNA synthetase (MetRS), Zn-domain"/>
    <property type="match status" value="1"/>
</dbReference>
<dbReference type="SUPFAM" id="SSF50249">
    <property type="entry name" value="Nucleic acid-binding proteins"/>
    <property type="match status" value="1"/>
</dbReference>
<dbReference type="SUPFAM" id="SSF52374">
    <property type="entry name" value="Nucleotidylyl transferase"/>
    <property type="match status" value="1"/>
</dbReference>
<dbReference type="PROSITE" id="PS00178">
    <property type="entry name" value="AA_TRNA_LIGASE_I"/>
    <property type="match status" value="1"/>
</dbReference>
<dbReference type="PROSITE" id="PS50886">
    <property type="entry name" value="TRBD"/>
    <property type="match status" value="1"/>
</dbReference>
<gene>
    <name evidence="1" type="primary">metG</name>
    <name type="ordered locus">PP_1097</name>
</gene>
<accession>Q88NV7</accession>
<keyword id="KW-0030">Aminoacyl-tRNA synthetase</keyword>
<keyword id="KW-0067">ATP-binding</keyword>
<keyword id="KW-0963">Cytoplasm</keyword>
<keyword id="KW-0436">Ligase</keyword>
<keyword id="KW-0479">Metal-binding</keyword>
<keyword id="KW-0547">Nucleotide-binding</keyword>
<keyword id="KW-0648">Protein biosynthesis</keyword>
<keyword id="KW-1185">Reference proteome</keyword>
<keyword id="KW-0694">RNA-binding</keyword>
<keyword id="KW-0820">tRNA-binding</keyword>
<keyword id="KW-0862">Zinc</keyword>
<organism>
    <name type="scientific">Pseudomonas putida (strain ATCC 47054 / DSM 6125 / CFBP 8728 / NCIMB 11950 / KT2440)</name>
    <dbReference type="NCBI Taxonomy" id="160488"/>
    <lineage>
        <taxon>Bacteria</taxon>
        <taxon>Pseudomonadati</taxon>
        <taxon>Pseudomonadota</taxon>
        <taxon>Gammaproteobacteria</taxon>
        <taxon>Pseudomonadales</taxon>
        <taxon>Pseudomonadaceae</taxon>
        <taxon>Pseudomonas</taxon>
    </lineage>
</organism>
<protein>
    <recommendedName>
        <fullName evidence="1">Methionine--tRNA ligase</fullName>
        <ecNumber evidence="1">6.1.1.10</ecNumber>
    </recommendedName>
    <alternativeName>
        <fullName evidence="1">Methionyl-tRNA synthetase</fullName>
        <shortName evidence="1">MetRS</shortName>
    </alternativeName>
</protein>
<proteinExistence type="inferred from homology"/>
<reference key="1">
    <citation type="journal article" date="2002" name="Environ. Microbiol.">
        <title>Complete genome sequence and comparative analysis of the metabolically versatile Pseudomonas putida KT2440.</title>
        <authorList>
            <person name="Nelson K.E."/>
            <person name="Weinel C."/>
            <person name="Paulsen I.T."/>
            <person name="Dodson R.J."/>
            <person name="Hilbert H."/>
            <person name="Martins dos Santos V.A.P."/>
            <person name="Fouts D.E."/>
            <person name="Gill S.R."/>
            <person name="Pop M."/>
            <person name="Holmes M."/>
            <person name="Brinkac L.M."/>
            <person name="Beanan M.J."/>
            <person name="DeBoy R.T."/>
            <person name="Daugherty S.C."/>
            <person name="Kolonay J.F."/>
            <person name="Madupu R."/>
            <person name="Nelson W.C."/>
            <person name="White O."/>
            <person name="Peterson J.D."/>
            <person name="Khouri H.M."/>
            <person name="Hance I."/>
            <person name="Chris Lee P."/>
            <person name="Holtzapple E.K."/>
            <person name="Scanlan D."/>
            <person name="Tran K."/>
            <person name="Moazzez A."/>
            <person name="Utterback T.R."/>
            <person name="Rizzo M."/>
            <person name="Lee K."/>
            <person name="Kosack D."/>
            <person name="Moestl D."/>
            <person name="Wedler H."/>
            <person name="Lauber J."/>
            <person name="Stjepandic D."/>
            <person name="Hoheisel J."/>
            <person name="Straetz M."/>
            <person name="Heim S."/>
            <person name="Kiewitz C."/>
            <person name="Eisen J.A."/>
            <person name="Timmis K.N."/>
            <person name="Duesterhoeft A."/>
            <person name="Tuemmler B."/>
            <person name="Fraser C.M."/>
        </authorList>
    </citation>
    <scope>NUCLEOTIDE SEQUENCE [LARGE SCALE GENOMIC DNA]</scope>
    <source>
        <strain>ATCC 47054 / DSM 6125 / CFBP 8728 / NCIMB 11950 / KT2440</strain>
    </source>
</reference>
<sequence length="679" mass="75187">MSEPRQILVTSALPYANGSIHLGHMLEYIQTDMWVRFQKLRGNQCIYVCADDAHGSAIMLRAEKEGITPEQLIANVQAEHSSDFADFLVDFDNFHSTHSDENRELSSLIYSRLREAGHIATRSVTQYFDPEKGMFLADRFIKGTCPKCAAEDQYGDNCEKCGATYAPTELKNPKSAISGATPVLRDSQHFFFKLPDFQAMLQQWTRSGTLQDAVANKLAEWLDSGLQEWDISRDAPYFGFEIPGEPGKYFYVWLDAPIGYMASFKNLCARRPELDFDAFWHEGSKAELYHFIGKDIVNFHALFWPAMLEGAGFRKPTAVNVHGYLTVNGAKMSKSRGTFIKARTYLDHLQPEYLRYYYAAKLGRGVDDLDLNLEDFVQKVNSDLVGKVVNIASRCAGFIHKGNEGVMVGGDAAPELTEAFLAAAPSIAEAYEARDFGRAMREIMALADRANAWIADKAPWSLAKQEGKQDEVQAICAQGINLFRQLVIFLKPVLPVLAADAEAFLNVAPLTWNDHLTRLENHQLNPFKALMSRIEPAKVEAMVAASKEDLLAAEAKAPAGNGELAKDPLSAEIEFDTFAAVDLRVALIVKAEAVAGADKLLQLTLDIGDERRNVFSGIKSAYPDPSKLEGRLTMMVANLKPRKMRFGVSEGMVMAAGPGGEEIYLLSPDSGAKPGQRIK</sequence>
<comment type="function">
    <text evidence="1">Is required not only for elongation of protein synthesis but also for the initiation of all mRNA translation through initiator tRNA(fMet) aminoacylation.</text>
</comment>
<comment type="catalytic activity">
    <reaction evidence="1">
        <text>tRNA(Met) + L-methionine + ATP = L-methionyl-tRNA(Met) + AMP + diphosphate</text>
        <dbReference type="Rhea" id="RHEA:13481"/>
        <dbReference type="Rhea" id="RHEA-COMP:9667"/>
        <dbReference type="Rhea" id="RHEA-COMP:9698"/>
        <dbReference type="ChEBI" id="CHEBI:30616"/>
        <dbReference type="ChEBI" id="CHEBI:33019"/>
        <dbReference type="ChEBI" id="CHEBI:57844"/>
        <dbReference type="ChEBI" id="CHEBI:78442"/>
        <dbReference type="ChEBI" id="CHEBI:78530"/>
        <dbReference type="ChEBI" id="CHEBI:456215"/>
        <dbReference type="EC" id="6.1.1.10"/>
    </reaction>
</comment>
<comment type="cofactor">
    <cofactor evidence="1">
        <name>Zn(2+)</name>
        <dbReference type="ChEBI" id="CHEBI:29105"/>
    </cofactor>
    <text evidence="1">Binds 1 zinc ion per subunit.</text>
</comment>
<comment type="subunit">
    <text evidence="1">Homodimer.</text>
</comment>
<comment type="subcellular location">
    <subcellularLocation>
        <location evidence="1">Cytoplasm</location>
    </subcellularLocation>
</comment>
<comment type="similarity">
    <text evidence="1">Belongs to the class-I aminoacyl-tRNA synthetase family. MetG type 1 subfamily.</text>
</comment>